<protein>
    <recommendedName>
        <fullName>Pro-apoptotic serine protease NMA111</fullName>
        <ecNumber>3.4.21.-</ecNumber>
    </recommendedName>
</protein>
<reference key="1">
    <citation type="journal article" date="2015" name="Genome Announc.">
        <title>Draft genome sequence of the cellulolytic fungus Chaetomium globosum.</title>
        <authorList>
            <person name="Cuomo C.A."/>
            <person name="Untereiner W.A."/>
            <person name="Ma L.-J."/>
            <person name="Grabherr M."/>
            <person name="Birren B.W."/>
        </authorList>
    </citation>
    <scope>NUCLEOTIDE SEQUENCE [LARGE SCALE GENOMIC DNA]</scope>
    <source>
        <strain>ATCC 6205 / CBS 148.51 / DSM 1962 / NBRC 6347 / NRRL 1970</strain>
    </source>
</reference>
<comment type="function">
    <text evidence="1">Nuclear serine protease which mediates apoptosis.</text>
</comment>
<comment type="subcellular location">
    <subcellularLocation>
        <location evidence="1">Nucleus</location>
    </subcellularLocation>
</comment>
<comment type="similarity">
    <text evidence="4">Belongs to the peptidase S1C family.</text>
</comment>
<feature type="chain" id="PRO_0000320350" description="Pro-apoptotic serine protease NMA111">
    <location>
        <begin position="1"/>
        <end position="1030"/>
    </location>
</feature>
<feature type="domain" description="PDZ 1">
    <location>
        <begin position="312"/>
        <end position="384"/>
    </location>
</feature>
<feature type="domain" description="PDZ 2">
    <location>
        <begin position="880"/>
        <end position="960"/>
    </location>
</feature>
<feature type="region of interest" description="Disordered" evidence="3">
    <location>
        <begin position="1"/>
        <end position="48"/>
    </location>
</feature>
<feature type="region of interest" description="Serine protease">
    <location>
        <begin position="89"/>
        <end position="279"/>
    </location>
</feature>
<feature type="compositionally biased region" description="Basic and acidic residues" evidence="3">
    <location>
        <begin position="15"/>
        <end position="24"/>
    </location>
</feature>
<feature type="active site" description="Charge relay system" evidence="2">
    <location>
        <position position="127"/>
    </location>
</feature>
<feature type="active site" description="Charge relay system" evidence="2">
    <location>
        <position position="158"/>
    </location>
</feature>
<feature type="active site" description="Charge relay system" evidence="2">
    <location>
        <position position="240"/>
    </location>
</feature>
<evidence type="ECO:0000250" key="1"/>
<evidence type="ECO:0000255" key="2"/>
<evidence type="ECO:0000256" key="3">
    <source>
        <dbReference type="SAM" id="MobiDB-lite"/>
    </source>
</evidence>
<evidence type="ECO:0000305" key="4"/>
<gene>
    <name type="primary">NMA111</name>
    <name type="ORF">CHGG_03812</name>
</gene>
<name>NM111_CHAGB</name>
<keyword id="KW-0053">Apoptosis</keyword>
<keyword id="KW-0378">Hydrolase</keyword>
<keyword id="KW-0539">Nucleus</keyword>
<keyword id="KW-0645">Protease</keyword>
<keyword id="KW-1185">Reference proteome</keyword>
<keyword id="KW-0677">Repeat</keyword>
<keyword id="KW-0720">Serine protease</keyword>
<organism>
    <name type="scientific">Chaetomium globosum (strain ATCC 6205 / CBS 148.51 / DSM 1962 / NBRC 6347 / NRRL 1970)</name>
    <name type="common">Soil fungus</name>
    <dbReference type="NCBI Taxonomy" id="306901"/>
    <lineage>
        <taxon>Eukaryota</taxon>
        <taxon>Fungi</taxon>
        <taxon>Dikarya</taxon>
        <taxon>Ascomycota</taxon>
        <taxon>Pezizomycotina</taxon>
        <taxon>Sordariomycetes</taxon>
        <taxon>Sordariomycetidae</taxon>
        <taxon>Sordariales</taxon>
        <taxon>Chaetomiaceae</taxon>
        <taxon>Chaetomium</taxon>
    </lineage>
</organism>
<proteinExistence type="inferred from homology"/>
<sequence length="1030" mass="113704">MNGTTSPIAARSKRKEPPHTVDGRHPKHHRTNGEVAPAADNTPDNQDEFEGEFGVELEEYEDARLPAVLPTGPDTAEWQATIQRVVRNVVSIRFCQTCSFDTDPALTSEATGFVVDAERGYILTNRHVVGSGPFWGYCIFDNHEEVDAYPVYRDPVHDFGILKFDPKAIKYMPVDALPLRPDLAKVGIEIRVVGNDAGEKLSILSGVISRLDRNAPEYGEGYSDFNTCYYQASAAASGGSSGSPVVNMDGYAVALQAGGRADGAATDYFLPLDRPLRALKCLQEGNPITRGDIQCQFVLKPFDECRRLGLTPEWEAQIRKAFPKETNMLVAEIVLPEGPSHKKAEEGDVLIKVNGELLTQFIRLDDILDSSVGKPVKLLLLRGGEEIEVEIEVGDLHSITPDRFVSVAGGSFHSLSYQQARLYGVACKGVFVCEAGGSFRFDNAENGWLIQTVDHKKTPDLETFIEVMKGIHDKARVVVTYKHLRDLHTLNTTILHIDRHWSKKMKLAVRNDETGLWDFTNLADPLPPVAPIPRKADFIQLEHTSHPAVADLVRSFVHVSCVMPVKLDGFPKNRKWGMGLVIDADKGLVVISRAIVPYDLCDITVTIADSIVVEGKVVFLHPLQNYAIIQYDPKLVDAPVLSARLSSQEITQGASTYFIGYNRIGRIVHAATTVTEIFAVTIPANSGAPRYRAVNVDAITVDTSLSGQCGSGVLVAQDGTVQALWLTYLGERNPSTHRDEEYHLGLATPTLLPVVEQIQRGVDPKLRMLSVEFRAIQMSQARLMGVSEEWIQKVSVANTAHHQLFMVTKRTFERNEQEEAAALLEGDVVLSLNGKIITKISDLDIMYSNEQLDAVLVRNCEELSLKLDTVAADDVETTRAVSFCGAIFHAPHHAVRQQISKLFSEVYVSARTRGSPSYQYGLAPTNFITHVNGKPTPDLEAFLAEVVKIPDNTYFRLRAMSFDSVPWVVTMKKNDHYFPTMELIKDPKEECGWRRITYEGGKVIQGEGPDGVVGSAGEITDMDVDADVCG</sequence>
<accession>Q2H334</accession>
<dbReference type="EC" id="3.4.21.-"/>
<dbReference type="EMBL" id="CH408032">
    <property type="protein sequence ID" value="EAQ87193.1"/>
    <property type="molecule type" value="Genomic_DNA"/>
</dbReference>
<dbReference type="RefSeq" id="XP_001223026.1">
    <property type="nucleotide sequence ID" value="XM_001223025.1"/>
</dbReference>
<dbReference type="SMR" id="Q2H334"/>
<dbReference type="FunCoup" id="Q2H334">
    <property type="interactions" value="122"/>
</dbReference>
<dbReference type="STRING" id="306901.Q2H334"/>
<dbReference type="GeneID" id="4392816"/>
<dbReference type="VEuPathDB" id="FungiDB:CHGG_03812"/>
<dbReference type="eggNOG" id="KOG1421">
    <property type="taxonomic scope" value="Eukaryota"/>
</dbReference>
<dbReference type="HOGENOM" id="CLU_003212_0_0_1"/>
<dbReference type="InParanoid" id="Q2H334"/>
<dbReference type="OMA" id="FWGHCVF"/>
<dbReference type="OrthoDB" id="4217619at2759"/>
<dbReference type="Proteomes" id="UP000001056">
    <property type="component" value="Unassembled WGS sequence"/>
</dbReference>
<dbReference type="GO" id="GO:0005634">
    <property type="term" value="C:nucleus"/>
    <property type="evidence" value="ECO:0007669"/>
    <property type="project" value="UniProtKB-SubCell"/>
</dbReference>
<dbReference type="GO" id="GO:0004252">
    <property type="term" value="F:serine-type endopeptidase activity"/>
    <property type="evidence" value="ECO:0007669"/>
    <property type="project" value="InterPro"/>
</dbReference>
<dbReference type="GO" id="GO:0006915">
    <property type="term" value="P:apoptotic process"/>
    <property type="evidence" value="ECO:0007669"/>
    <property type="project" value="UniProtKB-KW"/>
</dbReference>
<dbReference type="GO" id="GO:0006508">
    <property type="term" value="P:proteolysis"/>
    <property type="evidence" value="ECO:0007669"/>
    <property type="project" value="UniProtKB-KW"/>
</dbReference>
<dbReference type="CDD" id="cd06786">
    <property type="entry name" value="cpPDZ1_ScNma111-like"/>
    <property type="match status" value="1"/>
</dbReference>
<dbReference type="CDD" id="cd06719">
    <property type="entry name" value="PDZ2-4_Nma111p-like"/>
    <property type="match status" value="2"/>
</dbReference>
<dbReference type="Gene3D" id="2.30.42.10">
    <property type="match status" value="1"/>
</dbReference>
<dbReference type="Gene3D" id="2.40.10.120">
    <property type="match status" value="2"/>
</dbReference>
<dbReference type="InterPro" id="IPR025926">
    <property type="entry name" value="PDZ-like_dom"/>
</dbReference>
<dbReference type="InterPro" id="IPR036034">
    <property type="entry name" value="PDZ_sf"/>
</dbReference>
<dbReference type="InterPro" id="IPR009003">
    <property type="entry name" value="Peptidase_S1_PA"/>
</dbReference>
<dbReference type="InterPro" id="IPR001940">
    <property type="entry name" value="Peptidase_S1C"/>
</dbReference>
<dbReference type="PANTHER" id="PTHR46366">
    <property type="entry name" value="PRO-APOPTOTIC SERINE PROTEASE NMA111"/>
    <property type="match status" value="1"/>
</dbReference>
<dbReference type="PANTHER" id="PTHR46366:SF8">
    <property type="entry name" value="PRO-APOPTOTIC SERINE PROTEASE NMA111"/>
    <property type="match status" value="1"/>
</dbReference>
<dbReference type="Pfam" id="PF12812">
    <property type="entry name" value="PDZ_1"/>
    <property type="match status" value="2"/>
</dbReference>
<dbReference type="Pfam" id="PF13365">
    <property type="entry name" value="Trypsin_2"/>
    <property type="match status" value="1"/>
</dbReference>
<dbReference type="PRINTS" id="PR00834">
    <property type="entry name" value="PROTEASES2C"/>
</dbReference>
<dbReference type="SUPFAM" id="SSF50156">
    <property type="entry name" value="PDZ domain-like"/>
    <property type="match status" value="3"/>
</dbReference>
<dbReference type="SUPFAM" id="SSF50494">
    <property type="entry name" value="Trypsin-like serine proteases"/>
    <property type="match status" value="2"/>
</dbReference>